<sequence length="591" mass="64970">MAFTFPPSYRTLVGLYYIFTLMHTAVSTPPDDPVKCVSGNTNCTVTNSYGAFPDRSTCRAANVAYPKTEAELVSVVAAATQAGRKMRVTTRYSHSITKLVCTDGTEGLFISTKFLNHTVQADATAMTMTVESGMTLRQLIVEAAKVGLALPYAPYWWGLTVGGMMGTGAHGSSLWGKGSAVHDYVTEIRMVSPGSVNEGFAKIRILSETTTPNEFNAAKVSLGVLGVISQVTFELQPMFKRSLTYTMRNDSDFEDQAVTFGKKHEFADFIWLPSQGKVVYRRDDRVAVNTSGNGLFDFLPFRSQLSAAIAIIRTSEETQERFRDANGKCVGATIISSTLFAPSYGLTNNGIIFTGYPVVGSQNRMMSSGSCLDSLQDGLITACAWDSRIKGEFFHQTTLSVPLTQVKSFISDIKSLVKIEQKSLCGLELHYGILMRYVTSSPAYLGKETEALDFDITYYRAKDPLTPRLYEDFIEEIEQIALFKYNALPHWGKNRNLAFDGVIRKYNNAPAFLKVKDSYDPKGLFSSEWTDQILGIKGNASIVKDGCALEGLCICSKDAHCAPAKGYLCRPGKVYKEARVCTRVDGIISVI</sequence>
<protein>
    <recommendedName>
        <fullName evidence="6">L-gulonolactone oxidase 2</fullName>
        <shortName evidence="6">AtGulLO2</shortName>
        <ecNumber evidence="5">1.1.3.8</ecNumber>
    </recommendedName>
</protein>
<feature type="signal peptide" evidence="2">
    <location>
        <begin position="1"/>
        <end position="27"/>
    </location>
</feature>
<feature type="chain" id="PRO_0000432503" description="L-gulonolactone oxidase 2" evidence="2">
    <location>
        <begin position="28"/>
        <end position="591"/>
    </location>
</feature>
<feature type="domain" description="FAD-binding PCMH-type" evidence="3">
    <location>
        <begin position="56"/>
        <end position="238"/>
    </location>
</feature>
<reference key="1">
    <citation type="journal article" date="1999" name="Nature">
        <title>Sequence and analysis of chromosome 2 of the plant Arabidopsis thaliana.</title>
        <authorList>
            <person name="Lin X."/>
            <person name="Kaul S."/>
            <person name="Rounsley S.D."/>
            <person name="Shea T.P."/>
            <person name="Benito M.-I."/>
            <person name="Town C.D."/>
            <person name="Fujii C.Y."/>
            <person name="Mason T.M."/>
            <person name="Bowman C.L."/>
            <person name="Barnstead M.E."/>
            <person name="Feldblyum T.V."/>
            <person name="Buell C.R."/>
            <person name="Ketchum K.A."/>
            <person name="Lee J.J."/>
            <person name="Ronning C.M."/>
            <person name="Koo H.L."/>
            <person name="Moffat K.S."/>
            <person name="Cronin L.A."/>
            <person name="Shen M."/>
            <person name="Pai G."/>
            <person name="Van Aken S."/>
            <person name="Umayam L."/>
            <person name="Tallon L.J."/>
            <person name="Gill J.E."/>
            <person name="Adams M.D."/>
            <person name="Carrera A.J."/>
            <person name="Creasy T.H."/>
            <person name="Goodman H.M."/>
            <person name="Somerville C.R."/>
            <person name="Copenhaver G.P."/>
            <person name="Preuss D."/>
            <person name="Nierman W.C."/>
            <person name="White O."/>
            <person name="Eisen J.A."/>
            <person name="Salzberg S.L."/>
            <person name="Fraser C.M."/>
            <person name="Venter J.C."/>
        </authorList>
    </citation>
    <scope>NUCLEOTIDE SEQUENCE [LARGE SCALE GENOMIC DNA]</scope>
    <source>
        <strain>cv. Columbia</strain>
    </source>
</reference>
<reference key="2">
    <citation type="journal article" date="2017" name="Plant J.">
        <title>Araport11: a complete reannotation of the Arabidopsis thaliana reference genome.</title>
        <authorList>
            <person name="Cheng C.Y."/>
            <person name="Krishnakumar V."/>
            <person name="Chan A.P."/>
            <person name="Thibaud-Nissen F."/>
            <person name="Schobel S."/>
            <person name="Town C.D."/>
        </authorList>
    </citation>
    <scope>GENOME REANNOTATION</scope>
    <source>
        <strain>cv. Columbia</strain>
    </source>
</reference>
<reference key="3">
    <citation type="journal article" date="2003" name="Science">
        <title>Empirical analysis of transcriptional activity in the Arabidopsis genome.</title>
        <authorList>
            <person name="Yamada K."/>
            <person name="Lim J."/>
            <person name="Dale J.M."/>
            <person name="Chen H."/>
            <person name="Shinn P."/>
            <person name="Palm C.J."/>
            <person name="Southwick A.M."/>
            <person name="Wu H.C."/>
            <person name="Kim C.J."/>
            <person name="Nguyen M."/>
            <person name="Pham P.K."/>
            <person name="Cheuk R.F."/>
            <person name="Karlin-Newmann G."/>
            <person name="Liu S.X."/>
            <person name="Lam B."/>
            <person name="Sakano H."/>
            <person name="Wu T."/>
            <person name="Yu G."/>
            <person name="Miranda M."/>
            <person name="Quach H.L."/>
            <person name="Tripp M."/>
            <person name="Chang C.H."/>
            <person name="Lee J.M."/>
            <person name="Toriumi M.J."/>
            <person name="Chan M.M."/>
            <person name="Tang C.C."/>
            <person name="Onodera C.S."/>
            <person name="Deng J.M."/>
            <person name="Akiyama K."/>
            <person name="Ansari Y."/>
            <person name="Arakawa T."/>
            <person name="Banh J."/>
            <person name="Banno F."/>
            <person name="Bowser L."/>
            <person name="Brooks S.Y."/>
            <person name="Carninci P."/>
            <person name="Chao Q."/>
            <person name="Choy N."/>
            <person name="Enju A."/>
            <person name="Goldsmith A.D."/>
            <person name="Gurjal M."/>
            <person name="Hansen N.F."/>
            <person name="Hayashizaki Y."/>
            <person name="Johnson-Hopson C."/>
            <person name="Hsuan V.W."/>
            <person name="Iida K."/>
            <person name="Karnes M."/>
            <person name="Khan S."/>
            <person name="Koesema E."/>
            <person name="Ishida J."/>
            <person name="Jiang P.X."/>
            <person name="Jones T."/>
            <person name="Kawai J."/>
            <person name="Kamiya A."/>
            <person name="Meyers C."/>
            <person name="Nakajima M."/>
            <person name="Narusaka M."/>
            <person name="Seki M."/>
            <person name="Sakurai T."/>
            <person name="Satou M."/>
            <person name="Tamse R."/>
            <person name="Vaysberg M."/>
            <person name="Wallender E.K."/>
            <person name="Wong C."/>
            <person name="Yamamura Y."/>
            <person name="Yuan S."/>
            <person name="Shinozaki K."/>
            <person name="Davis R.W."/>
            <person name="Theologis A."/>
            <person name="Ecker J.R."/>
        </authorList>
    </citation>
    <scope>NUCLEOTIDE SEQUENCE [LARGE SCALE MRNA]</scope>
    <source>
        <strain>cv. Columbia</strain>
    </source>
</reference>
<reference key="4">
    <citation type="submission" date="2006-07" db="EMBL/GenBank/DDBJ databases">
        <title>Large-scale analysis of RIKEN Arabidopsis full-length (RAFL) cDNAs.</title>
        <authorList>
            <person name="Totoki Y."/>
            <person name="Seki M."/>
            <person name="Ishida J."/>
            <person name="Nakajima M."/>
            <person name="Enju A."/>
            <person name="Kamiya A."/>
            <person name="Narusaka M."/>
            <person name="Shin-i T."/>
            <person name="Nakagawa M."/>
            <person name="Sakamoto N."/>
            <person name="Oishi K."/>
            <person name="Kohara Y."/>
            <person name="Kobayashi M."/>
            <person name="Toyoda A."/>
            <person name="Sakaki Y."/>
            <person name="Sakurai T."/>
            <person name="Iida K."/>
            <person name="Akiyama K."/>
            <person name="Satou M."/>
            <person name="Toyoda T."/>
            <person name="Konagaya A."/>
            <person name="Carninci P."/>
            <person name="Kawai J."/>
            <person name="Hayashizaki Y."/>
            <person name="Shinozaki K."/>
        </authorList>
    </citation>
    <scope>NUCLEOTIDE SEQUENCE [LARGE SCALE MRNA] OF 1-590</scope>
    <source>
        <strain>cv. Columbia</strain>
    </source>
</reference>
<reference key="5">
    <citation type="journal article" date="2005" name="J. Exp. Bot.">
        <title>Methyl jasmonate stimulates the de novo biosynthesis of vitamin C in plant cell suspensions.</title>
        <authorList>
            <person name="Wolucka B.A."/>
            <person name="Goossens A."/>
            <person name="Inze D."/>
        </authorList>
    </citation>
    <scope>INDUCTION BY METHYL JASMONATE</scope>
</reference>
<reference key="6">
    <citation type="journal article" date="2010" name="Biosci. Biotechnol. Biochem.">
        <title>The contribution of Arabidopsis homologs of L-gulono-1,4-lactone oxidase to the biosynthesis of ascorbic acid.</title>
        <authorList>
            <person name="Maruta T."/>
            <person name="Ichikawa Y."/>
            <person name="Mieda T."/>
            <person name="Takeda T."/>
            <person name="Tamoi M."/>
            <person name="Yabuta Y."/>
            <person name="Ishikawa T."/>
            <person name="Shigeoka S."/>
        </authorList>
    </citation>
    <scope>FUNCTION</scope>
    <scope>CATALYTIC ACTIVITY</scope>
</reference>
<name>GGLO2_ARATH</name>
<evidence type="ECO:0000250" key="1">
    <source>
        <dbReference type="UniProtKB" id="P58710"/>
    </source>
</evidence>
<evidence type="ECO:0000255" key="2"/>
<evidence type="ECO:0000255" key="3">
    <source>
        <dbReference type="PROSITE-ProRule" id="PRU00718"/>
    </source>
</evidence>
<evidence type="ECO:0000269" key="4">
    <source>
    </source>
</evidence>
<evidence type="ECO:0000269" key="5">
    <source>
    </source>
</evidence>
<evidence type="ECO:0000303" key="6">
    <source>
    </source>
</evidence>
<evidence type="ECO:0000305" key="7"/>
<evidence type="ECO:0000312" key="8">
    <source>
        <dbReference type="Araport" id="AT2G46750"/>
    </source>
</evidence>
<evidence type="ECO:0000312" key="9">
    <source>
        <dbReference type="EMBL" id="AAC33494.1"/>
    </source>
</evidence>
<evidence type="ECO:0000312" key="10">
    <source>
        <dbReference type="EMBL" id="AAQ89618.1"/>
    </source>
</evidence>
<dbReference type="EC" id="1.1.3.8" evidence="5"/>
<dbReference type="EMBL" id="AC005310">
    <property type="protein sequence ID" value="AAC33494.1"/>
    <property type="status" value="ALT_INIT"/>
    <property type="molecule type" value="Genomic_DNA"/>
</dbReference>
<dbReference type="EMBL" id="CP002685">
    <property type="protein sequence ID" value="AEC10748.1"/>
    <property type="molecule type" value="Genomic_DNA"/>
</dbReference>
<dbReference type="EMBL" id="BT010596">
    <property type="protein sequence ID" value="AAQ89618.1"/>
    <property type="molecule type" value="mRNA"/>
</dbReference>
<dbReference type="EMBL" id="AK229437">
    <property type="protein sequence ID" value="BAF01297.1"/>
    <property type="molecule type" value="mRNA"/>
</dbReference>
<dbReference type="PIR" id="T02676">
    <property type="entry name" value="T02676"/>
</dbReference>
<dbReference type="RefSeq" id="NP_182198.2">
    <property type="nucleotide sequence ID" value="NM_130241.3"/>
</dbReference>
<dbReference type="SMR" id="Q6NQ66"/>
<dbReference type="FunCoup" id="Q6NQ66">
    <property type="interactions" value="500"/>
</dbReference>
<dbReference type="STRING" id="3702.Q6NQ66"/>
<dbReference type="PaxDb" id="3702-AT2G46750.1"/>
<dbReference type="ProteomicsDB" id="221839"/>
<dbReference type="EnsemblPlants" id="AT2G46750.1">
    <property type="protein sequence ID" value="AT2G46750.1"/>
    <property type="gene ID" value="AT2G46750"/>
</dbReference>
<dbReference type="GeneID" id="819288"/>
<dbReference type="Gramene" id="AT2G46750.1">
    <property type="protein sequence ID" value="AT2G46750.1"/>
    <property type="gene ID" value="AT2G46750"/>
</dbReference>
<dbReference type="KEGG" id="ath:AT2G46750"/>
<dbReference type="Araport" id="AT2G46750"/>
<dbReference type="TAIR" id="AT2G46750">
    <property type="gene designation" value="GULLO2"/>
</dbReference>
<dbReference type="eggNOG" id="KOG4730">
    <property type="taxonomic scope" value="Eukaryota"/>
</dbReference>
<dbReference type="HOGENOM" id="CLU_019762_2_0_1"/>
<dbReference type="InParanoid" id="Q6NQ66"/>
<dbReference type="OMA" id="DMARCEA"/>
<dbReference type="PhylomeDB" id="Q6NQ66"/>
<dbReference type="BRENDA" id="1.1.3.37">
    <property type="organism ID" value="399"/>
</dbReference>
<dbReference type="BRENDA" id="1.1.3.8">
    <property type="organism ID" value="399"/>
</dbReference>
<dbReference type="UniPathway" id="UPA00132"/>
<dbReference type="PRO" id="PR:Q6NQ66"/>
<dbReference type="Proteomes" id="UP000006548">
    <property type="component" value="Chromosome 2"/>
</dbReference>
<dbReference type="ExpressionAtlas" id="Q6NQ66">
    <property type="expression patterns" value="baseline and differential"/>
</dbReference>
<dbReference type="GO" id="GO:0016020">
    <property type="term" value="C:membrane"/>
    <property type="evidence" value="ECO:0007669"/>
    <property type="project" value="InterPro"/>
</dbReference>
<dbReference type="GO" id="GO:0003885">
    <property type="term" value="F:D-arabinono-1,4-lactone oxidase activity"/>
    <property type="evidence" value="ECO:0007669"/>
    <property type="project" value="InterPro"/>
</dbReference>
<dbReference type="GO" id="GO:0071949">
    <property type="term" value="F:FAD binding"/>
    <property type="evidence" value="ECO:0007669"/>
    <property type="project" value="InterPro"/>
</dbReference>
<dbReference type="GO" id="GO:0050105">
    <property type="term" value="F:L-gulonolactone oxidase activity"/>
    <property type="evidence" value="ECO:0000315"/>
    <property type="project" value="TAIR"/>
</dbReference>
<dbReference type="GO" id="GO:0019853">
    <property type="term" value="P:L-ascorbic acid biosynthetic process"/>
    <property type="evidence" value="ECO:0000315"/>
    <property type="project" value="TAIR"/>
</dbReference>
<dbReference type="FunFam" id="3.30.70.2520:FF:000003">
    <property type="entry name" value="L-gulonolactone oxidase 2"/>
    <property type="match status" value="1"/>
</dbReference>
<dbReference type="FunFam" id="3.30.465.10:FF:000033">
    <property type="entry name" value="L-gulonolactone oxidase 5"/>
    <property type="match status" value="1"/>
</dbReference>
<dbReference type="Gene3D" id="3.30.465.10">
    <property type="match status" value="1"/>
</dbReference>
<dbReference type="Gene3D" id="3.30.70.2520">
    <property type="match status" value="1"/>
</dbReference>
<dbReference type="Gene3D" id="3.30.43.10">
    <property type="entry name" value="Uridine Diphospho-n-acetylenolpyruvylglucosamine Reductase, domain 2"/>
    <property type="match status" value="1"/>
</dbReference>
<dbReference type="InterPro" id="IPR007173">
    <property type="entry name" value="ALO_C"/>
</dbReference>
<dbReference type="InterPro" id="IPR016166">
    <property type="entry name" value="FAD-bd_PCMH"/>
</dbReference>
<dbReference type="InterPro" id="IPR036318">
    <property type="entry name" value="FAD-bd_PCMH-like_sf"/>
</dbReference>
<dbReference type="InterPro" id="IPR016167">
    <property type="entry name" value="FAD-bd_PCMH_sub1"/>
</dbReference>
<dbReference type="InterPro" id="IPR016169">
    <property type="entry name" value="FAD-bd_PCMH_sub2"/>
</dbReference>
<dbReference type="InterPro" id="IPR050432">
    <property type="entry name" value="FAD-linked_Oxidoreductases_BP"/>
</dbReference>
<dbReference type="InterPro" id="IPR055154">
    <property type="entry name" value="GULLO2-like_C"/>
</dbReference>
<dbReference type="InterPro" id="IPR010030">
    <property type="entry name" value="GULO_Plant"/>
</dbReference>
<dbReference type="InterPro" id="IPR006094">
    <property type="entry name" value="Oxid_FAD_bind_N"/>
</dbReference>
<dbReference type="NCBIfam" id="TIGR01677">
    <property type="entry name" value="pln_FAD_oxido"/>
    <property type="match status" value="1"/>
</dbReference>
<dbReference type="PANTHER" id="PTHR13878">
    <property type="entry name" value="GULONOLACTONE OXIDASE"/>
    <property type="match status" value="1"/>
</dbReference>
<dbReference type="PANTHER" id="PTHR13878:SF159">
    <property type="entry name" value="L-GULONOLACTONE OXIDASE 2"/>
    <property type="match status" value="1"/>
</dbReference>
<dbReference type="Pfam" id="PF04030">
    <property type="entry name" value="ALO"/>
    <property type="match status" value="1"/>
</dbReference>
<dbReference type="Pfam" id="PF01565">
    <property type="entry name" value="FAD_binding_4"/>
    <property type="match status" value="1"/>
</dbReference>
<dbReference type="Pfam" id="PF22906">
    <property type="entry name" value="GULLO2-like_3rd"/>
    <property type="match status" value="1"/>
</dbReference>
<dbReference type="SUPFAM" id="SSF56176">
    <property type="entry name" value="FAD-binding/transporter-associated domain-like"/>
    <property type="match status" value="1"/>
</dbReference>
<dbReference type="PROSITE" id="PS51387">
    <property type="entry name" value="FAD_PCMH"/>
    <property type="match status" value="1"/>
</dbReference>
<organism evidence="10">
    <name type="scientific">Arabidopsis thaliana</name>
    <name type="common">Mouse-ear cress</name>
    <dbReference type="NCBI Taxonomy" id="3702"/>
    <lineage>
        <taxon>Eukaryota</taxon>
        <taxon>Viridiplantae</taxon>
        <taxon>Streptophyta</taxon>
        <taxon>Embryophyta</taxon>
        <taxon>Tracheophyta</taxon>
        <taxon>Spermatophyta</taxon>
        <taxon>Magnoliopsida</taxon>
        <taxon>eudicotyledons</taxon>
        <taxon>Gunneridae</taxon>
        <taxon>Pentapetalae</taxon>
        <taxon>rosids</taxon>
        <taxon>malvids</taxon>
        <taxon>Brassicales</taxon>
        <taxon>Brassicaceae</taxon>
        <taxon>Camelineae</taxon>
        <taxon>Arabidopsis</taxon>
    </lineage>
</organism>
<accession>Q6NQ66</accession>
<accession>O81031</accession>
<accession>Q0WNK2</accession>
<comment type="function">
    <text evidence="1 5">Catalyzes the oxidation of L-gulono-1,4-lactone to ascorbic acid (PubMed:20622436). L-gulono-1,4-lactone is oxidized to hydrogen peroxide and L-xylo-hexulonolactone which spontaneously isomerizes to L-ascorbate (By similarity).</text>
</comment>
<comment type="catalytic activity">
    <reaction evidence="5">
        <text>L-gulono-1,4-lactone + O2 = L-ascorbate + H2O2 + H(+)</text>
        <dbReference type="Rhea" id="RHEA:32363"/>
        <dbReference type="ChEBI" id="CHEBI:15378"/>
        <dbReference type="ChEBI" id="CHEBI:15379"/>
        <dbReference type="ChEBI" id="CHEBI:16240"/>
        <dbReference type="ChEBI" id="CHEBI:17587"/>
        <dbReference type="ChEBI" id="CHEBI:38290"/>
        <dbReference type="EC" id="1.1.3.8"/>
    </reaction>
</comment>
<comment type="cofactor">
    <cofactor evidence="1">
        <name>FAD</name>
        <dbReference type="ChEBI" id="CHEBI:57692"/>
    </cofactor>
</comment>
<comment type="pathway">
    <text evidence="5">Cofactor biosynthesis; L-ascorbate biosynthesis.</text>
</comment>
<comment type="induction">
    <text evidence="4">Up-regulated by methyl jasmonate.</text>
</comment>
<comment type="similarity">
    <text evidence="7">Belongs to the oxygen-dependent FAD-linked oxidoreductase family.</text>
</comment>
<comment type="sequence caution" evidence="7">
    <conflict type="erroneous initiation">
        <sequence resource="EMBL-CDS" id="AAC33494"/>
    </conflict>
    <text>Truncated N-terminus.</text>
</comment>
<gene>
    <name evidence="6" type="primary">GULLO2</name>
    <name evidence="8" type="ordered locus">At2g46750</name>
    <name evidence="9" type="ORF">F19D11.3</name>
</gene>
<proteinExistence type="evidence at protein level"/>
<keyword id="KW-0060">Ascorbate biosynthesis</keyword>
<keyword id="KW-0274">FAD</keyword>
<keyword id="KW-0285">Flavoprotein</keyword>
<keyword id="KW-0560">Oxidoreductase</keyword>
<keyword id="KW-1185">Reference proteome</keyword>
<keyword id="KW-0732">Signal</keyword>